<keyword id="KW-0963">Cytoplasm</keyword>
<keyword id="KW-0444">Lipid biosynthesis</keyword>
<keyword id="KW-0443">Lipid metabolism</keyword>
<keyword id="KW-0520">NAD</keyword>
<keyword id="KW-0521">NADP</keyword>
<keyword id="KW-0547">Nucleotide-binding</keyword>
<keyword id="KW-0560">Oxidoreductase</keyword>
<keyword id="KW-0594">Phospholipid biosynthesis</keyword>
<keyword id="KW-1208">Phospholipid metabolism</keyword>
<keyword id="KW-1185">Reference proteome</keyword>
<evidence type="ECO:0000255" key="1">
    <source>
        <dbReference type="HAMAP-Rule" id="MF_00394"/>
    </source>
</evidence>
<name>GPDA_DEIRA</name>
<gene>
    <name evidence="1" type="primary">gpsA</name>
    <name type="ordered locus">DR_2621</name>
</gene>
<accession>Q9RR76</accession>
<organism>
    <name type="scientific">Deinococcus radiodurans (strain ATCC 13939 / DSM 20539 / JCM 16871 / CCUG 27074 / LMG 4051 / NBRC 15346 / NCIMB 9279 / VKM B-1422 / R1)</name>
    <dbReference type="NCBI Taxonomy" id="243230"/>
    <lineage>
        <taxon>Bacteria</taxon>
        <taxon>Thermotogati</taxon>
        <taxon>Deinococcota</taxon>
        <taxon>Deinococci</taxon>
        <taxon>Deinococcales</taxon>
        <taxon>Deinococcaceae</taxon>
        <taxon>Deinococcus</taxon>
    </lineage>
</organism>
<proteinExistence type="inferred from homology"/>
<comment type="function">
    <text evidence="1">Catalyzes the reduction of the glycolytic intermediate dihydroxyacetone phosphate (DHAP) to sn-glycerol 3-phosphate (G3P), the key precursor for phospholipid synthesis.</text>
</comment>
<comment type="catalytic activity">
    <reaction evidence="1">
        <text>sn-glycerol 3-phosphate + NAD(+) = dihydroxyacetone phosphate + NADH + H(+)</text>
        <dbReference type="Rhea" id="RHEA:11092"/>
        <dbReference type="ChEBI" id="CHEBI:15378"/>
        <dbReference type="ChEBI" id="CHEBI:57540"/>
        <dbReference type="ChEBI" id="CHEBI:57597"/>
        <dbReference type="ChEBI" id="CHEBI:57642"/>
        <dbReference type="ChEBI" id="CHEBI:57945"/>
        <dbReference type="EC" id="1.1.1.94"/>
    </reaction>
    <physiologicalReaction direction="right-to-left" evidence="1">
        <dbReference type="Rhea" id="RHEA:11094"/>
    </physiologicalReaction>
</comment>
<comment type="catalytic activity">
    <reaction evidence="1">
        <text>sn-glycerol 3-phosphate + NADP(+) = dihydroxyacetone phosphate + NADPH + H(+)</text>
        <dbReference type="Rhea" id="RHEA:11096"/>
        <dbReference type="ChEBI" id="CHEBI:15378"/>
        <dbReference type="ChEBI" id="CHEBI:57597"/>
        <dbReference type="ChEBI" id="CHEBI:57642"/>
        <dbReference type="ChEBI" id="CHEBI:57783"/>
        <dbReference type="ChEBI" id="CHEBI:58349"/>
        <dbReference type="EC" id="1.1.1.94"/>
    </reaction>
    <physiologicalReaction direction="right-to-left" evidence="1">
        <dbReference type="Rhea" id="RHEA:11098"/>
    </physiologicalReaction>
</comment>
<comment type="pathway">
    <text evidence="1">Membrane lipid metabolism; glycerophospholipid metabolism.</text>
</comment>
<comment type="subcellular location">
    <subcellularLocation>
        <location evidence="1">Cytoplasm</location>
    </subcellularLocation>
</comment>
<comment type="similarity">
    <text evidence="1">Belongs to the NAD-dependent glycerol-3-phosphate dehydrogenase family.</text>
</comment>
<sequence>MTQGSALPVLGAGGWGTALAVAAARAGQPARLWARRPDFAARLAEVRENREYLPGVLLPPEVAVTSDLPGAVAGADFALLVVPSVGVPELLAGLPRELGVVLCAKGLAPDGSRLSEYAAGLGFDRVAVLSGPNHAEEIGRGLPAATVVASRDPALAAAVQTALMSPSLRVYTSRDVPGVELGGVLKNVIAVAAGMGDGLHLGDNAKATLLTRGLREMNRYLRSLGAEEETVYGLSGLGDLIATATSPHSRNRAAGEAIARGESPQQGGKVVEGLRTAGLLDAWAAAHGHDLPIVRAVAQVTRGEWSPAEGVRHLMGREAKGETEAGEP</sequence>
<reference key="1">
    <citation type="journal article" date="1999" name="Science">
        <title>Genome sequence of the radioresistant bacterium Deinococcus radiodurans R1.</title>
        <authorList>
            <person name="White O."/>
            <person name="Eisen J.A."/>
            <person name="Heidelberg J.F."/>
            <person name="Hickey E.K."/>
            <person name="Peterson J.D."/>
            <person name="Dodson R.J."/>
            <person name="Haft D.H."/>
            <person name="Gwinn M.L."/>
            <person name="Nelson W.C."/>
            <person name="Richardson D.L."/>
            <person name="Moffat K.S."/>
            <person name="Qin H."/>
            <person name="Jiang L."/>
            <person name="Pamphile W."/>
            <person name="Crosby M."/>
            <person name="Shen M."/>
            <person name="Vamathevan J.J."/>
            <person name="Lam P."/>
            <person name="McDonald L.A."/>
            <person name="Utterback T.R."/>
            <person name="Zalewski C."/>
            <person name="Makarova K.S."/>
            <person name="Aravind L."/>
            <person name="Daly M.J."/>
            <person name="Minton K.W."/>
            <person name="Fleischmann R.D."/>
            <person name="Ketchum K.A."/>
            <person name="Nelson K.E."/>
            <person name="Salzberg S.L."/>
            <person name="Smith H.O."/>
            <person name="Venter J.C."/>
            <person name="Fraser C.M."/>
        </authorList>
    </citation>
    <scope>NUCLEOTIDE SEQUENCE [LARGE SCALE GENOMIC DNA]</scope>
    <source>
        <strain>ATCC 13939 / DSM 20539 / JCM 16871 / CCUG 27074 / LMG 4051 / NBRC 15346 / NCIMB 9279 / VKM B-1422 / R1</strain>
    </source>
</reference>
<protein>
    <recommendedName>
        <fullName evidence="1">Glycerol-3-phosphate dehydrogenase [NAD(P)+]</fullName>
        <ecNumber evidence="1">1.1.1.94</ecNumber>
    </recommendedName>
    <alternativeName>
        <fullName evidence="1">NAD(P)(+)-dependent glycerol-3-phosphate dehydrogenase</fullName>
    </alternativeName>
    <alternativeName>
        <fullName evidence="1">NAD(P)H-dependent dihydroxyacetone-phosphate reductase</fullName>
    </alternativeName>
</protein>
<dbReference type="EC" id="1.1.1.94" evidence="1"/>
<dbReference type="EMBL" id="AE000513">
    <property type="protein sequence ID" value="AAF12158.1"/>
    <property type="molecule type" value="Genomic_DNA"/>
</dbReference>
<dbReference type="PIR" id="H75251">
    <property type="entry name" value="H75251"/>
</dbReference>
<dbReference type="RefSeq" id="NP_296340.1">
    <property type="nucleotide sequence ID" value="NC_001263.1"/>
</dbReference>
<dbReference type="RefSeq" id="WP_010889245.1">
    <property type="nucleotide sequence ID" value="NC_001263.1"/>
</dbReference>
<dbReference type="SMR" id="Q9RR76"/>
<dbReference type="FunCoup" id="Q9RR76">
    <property type="interactions" value="382"/>
</dbReference>
<dbReference type="STRING" id="243230.DR_2621"/>
<dbReference type="PaxDb" id="243230-DR_2621"/>
<dbReference type="EnsemblBacteria" id="AAF12158">
    <property type="protein sequence ID" value="AAF12158"/>
    <property type="gene ID" value="DR_2621"/>
</dbReference>
<dbReference type="GeneID" id="69518875"/>
<dbReference type="KEGG" id="dra:DR_2621"/>
<dbReference type="PATRIC" id="fig|243230.17.peg.2869"/>
<dbReference type="eggNOG" id="COG0240">
    <property type="taxonomic scope" value="Bacteria"/>
</dbReference>
<dbReference type="HOGENOM" id="CLU_033449_0_2_0"/>
<dbReference type="InParanoid" id="Q9RR76"/>
<dbReference type="OrthoDB" id="9812273at2"/>
<dbReference type="UniPathway" id="UPA00940"/>
<dbReference type="Proteomes" id="UP000002524">
    <property type="component" value="Chromosome 1"/>
</dbReference>
<dbReference type="GO" id="GO:0005829">
    <property type="term" value="C:cytosol"/>
    <property type="evidence" value="ECO:0000318"/>
    <property type="project" value="GO_Central"/>
</dbReference>
<dbReference type="GO" id="GO:0047952">
    <property type="term" value="F:glycerol-3-phosphate dehydrogenase [NAD(P)+] activity"/>
    <property type="evidence" value="ECO:0000318"/>
    <property type="project" value="GO_Central"/>
</dbReference>
<dbReference type="GO" id="GO:0051287">
    <property type="term" value="F:NAD binding"/>
    <property type="evidence" value="ECO:0007669"/>
    <property type="project" value="InterPro"/>
</dbReference>
<dbReference type="GO" id="GO:0005975">
    <property type="term" value="P:carbohydrate metabolic process"/>
    <property type="evidence" value="ECO:0007669"/>
    <property type="project" value="InterPro"/>
</dbReference>
<dbReference type="GO" id="GO:0046167">
    <property type="term" value="P:glycerol-3-phosphate biosynthetic process"/>
    <property type="evidence" value="ECO:0007669"/>
    <property type="project" value="UniProtKB-UniRule"/>
</dbReference>
<dbReference type="GO" id="GO:0046168">
    <property type="term" value="P:glycerol-3-phosphate catabolic process"/>
    <property type="evidence" value="ECO:0007669"/>
    <property type="project" value="InterPro"/>
</dbReference>
<dbReference type="GO" id="GO:0006072">
    <property type="term" value="P:glycerol-3-phosphate metabolic process"/>
    <property type="evidence" value="ECO:0000318"/>
    <property type="project" value="GO_Central"/>
</dbReference>
<dbReference type="GO" id="GO:0006650">
    <property type="term" value="P:glycerophospholipid metabolic process"/>
    <property type="evidence" value="ECO:0007669"/>
    <property type="project" value="UniProtKB-UniRule"/>
</dbReference>
<dbReference type="GO" id="GO:0008654">
    <property type="term" value="P:phospholipid biosynthetic process"/>
    <property type="evidence" value="ECO:0007669"/>
    <property type="project" value="UniProtKB-KW"/>
</dbReference>
<dbReference type="FunFam" id="1.10.1040.10:FF:000025">
    <property type="entry name" value="Glycerol-3-phosphate dehydrogenase [NAD(P)+]"/>
    <property type="match status" value="1"/>
</dbReference>
<dbReference type="FunFam" id="3.40.50.720:FF:000019">
    <property type="entry name" value="Glycerol-3-phosphate dehydrogenase [NAD(P)+]"/>
    <property type="match status" value="1"/>
</dbReference>
<dbReference type="Gene3D" id="1.10.1040.10">
    <property type="entry name" value="N-(1-d-carboxylethyl)-l-norvaline Dehydrogenase, domain 2"/>
    <property type="match status" value="1"/>
</dbReference>
<dbReference type="Gene3D" id="3.40.50.720">
    <property type="entry name" value="NAD(P)-binding Rossmann-like Domain"/>
    <property type="match status" value="1"/>
</dbReference>
<dbReference type="HAMAP" id="MF_00394">
    <property type="entry name" value="NAD_Glyc3P_dehydrog"/>
    <property type="match status" value="1"/>
</dbReference>
<dbReference type="InterPro" id="IPR008927">
    <property type="entry name" value="6-PGluconate_DH-like_C_sf"/>
</dbReference>
<dbReference type="InterPro" id="IPR013328">
    <property type="entry name" value="6PGD_dom2"/>
</dbReference>
<dbReference type="InterPro" id="IPR006168">
    <property type="entry name" value="G3P_DH_NAD-dep"/>
</dbReference>
<dbReference type="InterPro" id="IPR006109">
    <property type="entry name" value="G3P_DH_NAD-dep_C"/>
</dbReference>
<dbReference type="InterPro" id="IPR011128">
    <property type="entry name" value="G3P_DH_NAD-dep_N"/>
</dbReference>
<dbReference type="InterPro" id="IPR036291">
    <property type="entry name" value="NAD(P)-bd_dom_sf"/>
</dbReference>
<dbReference type="NCBIfam" id="NF000940">
    <property type="entry name" value="PRK00094.1-2"/>
    <property type="match status" value="1"/>
</dbReference>
<dbReference type="NCBIfam" id="NF000942">
    <property type="entry name" value="PRK00094.1-4"/>
    <property type="match status" value="1"/>
</dbReference>
<dbReference type="NCBIfam" id="NF011211">
    <property type="entry name" value="PRK14618.1"/>
    <property type="match status" value="1"/>
</dbReference>
<dbReference type="PANTHER" id="PTHR11728">
    <property type="entry name" value="GLYCEROL-3-PHOSPHATE DEHYDROGENASE"/>
    <property type="match status" value="1"/>
</dbReference>
<dbReference type="PANTHER" id="PTHR11728:SF1">
    <property type="entry name" value="GLYCEROL-3-PHOSPHATE DEHYDROGENASE [NAD(+)] 2, CHLOROPLASTIC"/>
    <property type="match status" value="1"/>
</dbReference>
<dbReference type="Pfam" id="PF07479">
    <property type="entry name" value="NAD_Gly3P_dh_C"/>
    <property type="match status" value="1"/>
</dbReference>
<dbReference type="Pfam" id="PF01210">
    <property type="entry name" value="NAD_Gly3P_dh_N"/>
    <property type="match status" value="1"/>
</dbReference>
<dbReference type="PIRSF" id="PIRSF000114">
    <property type="entry name" value="Glycerol-3-P_dh"/>
    <property type="match status" value="1"/>
</dbReference>
<dbReference type="PRINTS" id="PR00077">
    <property type="entry name" value="GPDHDRGNASE"/>
</dbReference>
<dbReference type="SUPFAM" id="SSF48179">
    <property type="entry name" value="6-phosphogluconate dehydrogenase C-terminal domain-like"/>
    <property type="match status" value="1"/>
</dbReference>
<dbReference type="SUPFAM" id="SSF51735">
    <property type="entry name" value="NAD(P)-binding Rossmann-fold domains"/>
    <property type="match status" value="1"/>
</dbReference>
<dbReference type="PROSITE" id="PS00957">
    <property type="entry name" value="NAD_G3PDH"/>
    <property type="match status" value="1"/>
</dbReference>
<feature type="chain" id="PRO_0000137954" description="Glycerol-3-phosphate dehydrogenase [NAD(P)+]">
    <location>
        <begin position="1"/>
        <end position="328"/>
    </location>
</feature>
<feature type="active site" description="Proton acceptor" evidence="1">
    <location>
        <position position="186"/>
    </location>
</feature>
<feature type="binding site" evidence="1">
    <location>
        <position position="15"/>
    </location>
    <ligand>
        <name>NADPH</name>
        <dbReference type="ChEBI" id="CHEBI:57783"/>
    </ligand>
</feature>
<feature type="binding site" evidence="1">
    <location>
        <position position="35"/>
    </location>
    <ligand>
        <name>NADPH</name>
        <dbReference type="ChEBI" id="CHEBI:57783"/>
    </ligand>
</feature>
<feature type="binding site" evidence="1">
    <location>
        <position position="36"/>
    </location>
    <ligand>
        <name>NADPH</name>
        <dbReference type="ChEBI" id="CHEBI:57783"/>
    </ligand>
</feature>
<feature type="binding site" evidence="1">
    <location>
        <position position="105"/>
    </location>
    <ligand>
        <name>NADPH</name>
        <dbReference type="ChEBI" id="CHEBI:57783"/>
    </ligand>
</feature>
<feature type="binding site" evidence="1">
    <location>
        <position position="105"/>
    </location>
    <ligand>
        <name>sn-glycerol 3-phosphate</name>
        <dbReference type="ChEBI" id="CHEBI:57597"/>
    </ligand>
</feature>
<feature type="binding site" evidence="1">
    <location>
        <position position="131"/>
    </location>
    <ligand>
        <name>sn-glycerol 3-phosphate</name>
        <dbReference type="ChEBI" id="CHEBI:57597"/>
    </ligand>
</feature>
<feature type="binding site" evidence="1">
    <location>
        <position position="135"/>
    </location>
    <ligand>
        <name>NADPH</name>
        <dbReference type="ChEBI" id="CHEBI:57783"/>
    </ligand>
</feature>
<feature type="binding site" evidence="1">
    <location>
        <position position="186"/>
    </location>
    <ligand>
        <name>sn-glycerol 3-phosphate</name>
        <dbReference type="ChEBI" id="CHEBI:57597"/>
    </ligand>
</feature>
<feature type="binding site" evidence="1">
    <location>
        <position position="239"/>
    </location>
    <ligand>
        <name>sn-glycerol 3-phosphate</name>
        <dbReference type="ChEBI" id="CHEBI:57597"/>
    </ligand>
</feature>
<feature type="binding site" evidence="1">
    <location>
        <position position="249"/>
    </location>
    <ligand>
        <name>sn-glycerol 3-phosphate</name>
        <dbReference type="ChEBI" id="CHEBI:57597"/>
    </ligand>
</feature>
<feature type="binding site" evidence="1">
    <location>
        <position position="250"/>
    </location>
    <ligand>
        <name>NADPH</name>
        <dbReference type="ChEBI" id="CHEBI:57783"/>
    </ligand>
</feature>
<feature type="binding site" evidence="1">
    <location>
        <position position="250"/>
    </location>
    <ligand>
        <name>sn-glycerol 3-phosphate</name>
        <dbReference type="ChEBI" id="CHEBI:57597"/>
    </ligand>
</feature>
<feature type="binding site" evidence="1">
    <location>
        <position position="251"/>
    </location>
    <ligand>
        <name>sn-glycerol 3-phosphate</name>
        <dbReference type="ChEBI" id="CHEBI:57597"/>
    </ligand>
</feature>
<feature type="binding site" evidence="1">
    <location>
        <position position="270"/>
    </location>
    <ligand>
        <name>NADPH</name>
        <dbReference type="ChEBI" id="CHEBI:57783"/>
    </ligand>
</feature>
<feature type="binding site" evidence="1">
    <location>
        <position position="272"/>
    </location>
    <ligand>
        <name>NADPH</name>
        <dbReference type="ChEBI" id="CHEBI:57783"/>
    </ligand>
</feature>